<name>MQO_PAEAT</name>
<feature type="chain" id="PRO_0000325485" description="Probable malate:quinone oxidoreductase">
    <location>
        <begin position="1"/>
        <end position="501"/>
    </location>
</feature>
<reference key="1">
    <citation type="journal article" date="2006" name="PLoS Genet.">
        <title>Secrets of soil survival revealed by the genome sequence of Arthrobacter aurescens TC1.</title>
        <authorList>
            <person name="Mongodin E.F."/>
            <person name="Shapir N."/>
            <person name="Daugherty S.C."/>
            <person name="DeBoy R.T."/>
            <person name="Emerson J.B."/>
            <person name="Shvartzbeyn A."/>
            <person name="Radune D."/>
            <person name="Vamathevan J."/>
            <person name="Riggs F."/>
            <person name="Grinberg V."/>
            <person name="Khouri H.M."/>
            <person name="Wackett L.P."/>
            <person name="Nelson K.E."/>
            <person name="Sadowsky M.J."/>
        </authorList>
    </citation>
    <scope>NUCLEOTIDE SEQUENCE [LARGE SCALE GENOMIC DNA]</scope>
    <source>
        <strain>TC1</strain>
    </source>
</reference>
<protein>
    <recommendedName>
        <fullName evidence="1">Probable malate:quinone oxidoreductase</fullName>
        <ecNumber evidence="1">1.1.5.4</ecNumber>
    </recommendedName>
    <alternativeName>
        <fullName evidence="1">MQO</fullName>
    </alternativeName>
    <alternativeName>
        <fullName evidence="1">Malate dehydrogenase [quinone]</fullName>
    </alternativeName>
</protein>
<dbReference type="EC" id="1.1.5.4" evidence="1"/>
<dbReference type="EMBL" id="CP000474">
    <property type="protein sequence ID" value="ABM07670.1"/>
    <property type="status" value="ALT_INIT"/>
    <property type="molecule type" value="Genomic_DNA"/>
</dbReference>
<dbReference type="SMR" id="A1R7M9"/>
<dbReference type="STRING" id="290340.AAur_2520"/>
<dbReference type="KEGG" id="aau:AAur_2520"/>
<dbReference type="eggNOG" id="COG0579">
    <property type="taxonomic scope" value="Bacteria"/>
</dbReference>
<dbReference type="HOGENOM" id="CLU_028151_0_0_11"/>
<dbReference type="OrthoDB" id="9763983at2"/>
<dbReference type="UniPathway" id="UPA00223">
    <property type="reaction ID" value="UER01008"/>
</dbReference>
<dbReference type="Proteomes" id="UP000000637">
    <property type="component" value="Chromosome"/>
</dbReference>
<dbReference type="GO" id="GO:0047545">
    <property type="term" value="F:2-hydroxyglutarate dehydrogenase activity"/>
    <property type="evidence" value="ECO:0007669"/>
    <property type="project" value="TreeGrafter"/>
</dbReference>
<dbReference type="GO" id="GO:0008924">
    <property type="term" value="F:L-malate dehydrogenase (quinone) activity"/>
    <property type="evidence" value="ECO:0007669"/>
    <property type="project" value="UniProtKB-UniRule"/>
</dbReference>
<dbReference type="GO" id="GO:0006099">
    <property type="term" value="P:tricarboxylic acid cycle"/>
    <property type="evidence" value="ECO:0007669"/>
    <property type="project" value="UniProtKB-UniRule"/>
</dbReference>
<dbReference type="Gene3D" id="3.30.9.10">
    <property type="entry name" value="D-Amino Acid Oxidase, subunit A, domain 2"/>
    <property type="match status" value="1"/>
</dbReference>
<dbReference type="Gene3D" id="3.50.50.60">
    <property type="entry name" value="FAD/NAD(P)-binding domain"/>
    <property type="match status" value="1"/>
</dbReference>
<dbReference type="HAMAP" id="MF_00212">
    <property type="entry name" value="MQO"/>
    <property type="match status" value="1"/>
</dbReference>
<dbReference type="InterPro" id="IPR036188">
    <property type="entry name" value="FAD/NAD-bd_sf"/>
</dbReference>
<dbReference type="InterPro" id="IPR006231">
    <property type="entry name" value="MQO"/>
</dbReference>
<dbReference type="NCBIfam" id="TIGR01320">
    <property type="entry name" value="mal_quin_oxido"/>
    <property type="match status" value="1"/>
</dbReference>
<dbReference type="NCBIfam" id="NF003603">
    <property type="entry name" value="PRK05257.1-1"/>
    <property type="match status" value="1"/>
</dbReference>
<dbReference type="NCBIfam" id="NF003605">
    <property type="entry name" value="PRK05257.1-4"/>
    <property type="match status" value="1"/>
</dbReference>
<dbReference type="NCBIfam" id="NF003606">
    <property type="entry name" value="PRK05257.2-1"/>
    <property type="match status" value="1"/>
</dbReference>
<dbReference type="NCBIfam" id="NF003609">
    <property type="entry name" value="PRK05257.2-5"/>
    <property type="match status" value="1"/>
</dbReference>
<dbReference type="NCBIfam" id="NF003610">
    <property type="entry name" value="PRK05257.3-1"/>
    <property type="match status" value="1"/>
</dbReference>
<dbReference type="NCBIfam" id="NF003611">
    <property type="entry name" value="PRK05257.3-2"/>
    <property type="match status" value="1"/>
</dbReference>
<dbReference type="NCBIfam" id="NF009875">
    <property type="entry name" value="PRK13339.1"/>
    <property type="match status" value="1"/>
</dbReference>
<dbReference type="PANTHER" id="PTHR43104">
    <property type="entry name" value="L-2-HYDROXYGLUTARATE DEHYDROGENASE, MITOCHONDRIAL"/>
    <property type="match status" value="1"/>
</dbReference>
<dbReference type="PANTHER" id="PTHR43104:SF2">
    <property type="entry name" value="L-2-HYDROXYGLUTARATE DEHYDROGENASE, MITOCHONDRIAL"/>
    <property type="match status" value="1"/>
</dbReference>
<dbReference type="Pfam" id="PF06039">
    <property type="entry name" value="Mqo"/>
    <property type="match status" value="1"/>
</dbReference>
<dbReference type="SUPFAM" id="SSF51905">
    <property type="entry name" value="FAD/NAD(P)-binding domain"/>
    <property type="match status" value="1"/>
</dbReference>
<accession>A1R7M9</accession>
<comment type="catalytic activity">
    <reaction evidence="1">
        <text>(S)-malate + a quinone = a quinol + oxaloacetate</text>
        <dbReference type="Rhea" id="RHEA:46012"/>
        <dbReference type="ChEBI" id="CHEBI:15589"/>
        <dbReference type="ChEBI" id="CHEBI:16452"/>
        <dbReference type="ChEBI" id="CHEBI:24646"/>
        <dbReference type="ChEBI" id="CHEBI:132124"/>
        <dbReference type="EC" id="1.1.5.4"/>
    </reaction>
</comment>
<comment type="cofactor">
    <cofactor evidence="1">
        <name>FAD</name>
        <dbReference type="ChEBI" id="CHEBI:57692"/>
    </cofactor>
</comment>
<comment type="pathway">
    <text evidence="1">Carbohydrate metabolism; tricarboxylic acid cycle; oxaloacetate from (S)-malate (quinone route): step 1/1.</text>
</comment>
<comment type="similarity">
    <text evidence="1">Belongs to the MQO family.</text>
</comment>
<comment type="sequence caution" evidence="2">
    <conflict type="erroneous initiation">
        <sequence resource="EMBL-CDS" id="ABM07670"/>
    </conflict>
</comment>
<sequence length="501" mass="54163">MTFISKTQHADVVLIGGGIMSATLGAFIKQLEPTWTISLFERLDEAGLESSGPWNNAGTGHAALCELNYSPAAKDGSVDPSKALHINEQFQLSRQFWSHLVDSNVIGSPKGFINTVPHMSFVIGDDHSNFLKNRYEALKPNTLFRSMEYTEDQDQIAKWAPLIVKGRDRKQRVAATRAAEGTDVDFGALTRELTGYLQSSGAEVNYGHDVTNIHRAAGGGWDLSIKHPKSGEHGRIHAKFVFVGAGGGALHLLQASGIPESKGYGGFPVSGQFFRCTDDAITSQHSAKVYGQASVGAPPMSVPHLDTRYVDGKRSLLFGPYAGFSTNFLKTSSYLDLPLSIRPGNIIPMLAVAKDNMDLTAYLIKEVAKRHEAKVEALREYYPEAAGGNWELITAGQRVQIIKKHPQKGGVLQFGTEVIASRDGSIGALLGASPGASTAVPIMIELLQKSFPKNFKGWQSKLKDMMPGYGVKLNENPDLAAELEASTARSLQLEVANAIQG</sequence>
<organism>
    <name type="scientific">Paenarthrobacter aurescens (strain TC1)</name>
    <dbReference type="NCBI Taxonomy" id="290340"/>
    <lineage>
        <taxon>Bacteria</taxon>
        <taxon>Bacillati</taxon>
        <taxon>Actinomycetota</taxon>
        <taxon>Actinomycetes</taxon>
        <taxon>Micrococcales</taxon>
        <taxon>Micrococcaceae</taxon>
        <taxon>Paenarthrobacter</taxon>
    </lineage>
</organism>
<proteinExistence type="inferred from homology"/>
<keyword id="KW-0274">FAD</keyword>
<keyword id="KW-0285">Flavoprotein</keyword>
<keyword id="KW-0560">Oxidoreductase</keyword>
<keyword id="KW-0816">Tricarboxylic acid cycle</keyword>
<evidence type="ECO:0000255" key="1">
    <source>
        <dbReference type="HAMAP-Rule" id="MF_00212"/>
    </source>
</evidence>
<evidence type="ECO:0000305" key="2"/>
<gene>
    <name evidence="1" type="primary">mqo</name>
    <name type="ordered locus">AAur_2520</name>
</gene>